<proteinExistence type="inferred from homology"/>
<protein>
    <recommendedName>
        <fullName evidence="1">Uridine kinase</fullName>
        <ecNumber evidence="1">2.7.1.48</ecNumber>
    </recommendedName>
    <alternativeName>
        <fullName evidence="1">Cytidine monophosphokinase</fullName>
    </alternativeName>
    <alternativeName>
        <fullName evidence="1">Uridine monophosphokinase</fullName>
    </alternativeName>
</protein>
<dbReference type="EC" id="2.7.1.48" evidence="1"/>
<dbReference type="EMBL" id="CP000947">
    <property type="protein sequence ID" value="ACA32670.1"/>
    <property type="molecule type" value="Genomic_DNA"/>
</dbReference>
<dbReference type="RefSeq" id="WP_011608800.1">
    <property type="nucleotide sequence ID" value="NC_010519.1"/>
</dbReference>
<dbReference type="SMR" id="B0UT65"/>
<dbReference type="STRING" id="228400.HSM_0984"/>
<dbReference type="GeneID" id="31487282"/>
<dbReference type="KEGG" id="hsm:HSM_0984"/>
<dbReference type="HOGENOM" id="CLU_021278_1_2_6"/>
<dbReference type="UniPathway" id="UPA00574">
    <property type="reaction ID" value="UER00637"/>
</dbReference>
<dbReference type="UniPathway" id="UPA00579">
    <property type="reaction ID" value="UER00640"/>
</dbReference>
<dbReference type="GO" id="GO:0005737">
    <property type="term" value="C:cytoplasm"/>
    <property type="evidence" value="ECO:0007669"/>
    <property type="project" value="UniProtKB-SubCell"/>
</dbReference>
<dbReference type="GO" id="GO:0005524">
    <property type="term" value="F:ATP binding"/>
    <property type="evidence" value="ECO:0007669"/>
    <property type="project" value="UniProtKB-UniRule"/>
</dbReference>
<dbReference type="GO" id="GO:0043771">
    <property type="term" value="F:cytidine kinase activity"/>
    <property type="evidence" value="ECO:0007669"/>
    <property type="project" value="RHEA"/>
</dbReference>
<dbReference type="GO" id="GO:0004849">
    <property type="term" value="F:uridine kinase activity"/>
    <property type="evidence" value="ECO:0007669"/>
    <property type="project" value="UniProtKB-UniRule"/>
</dbReference>
<dbReference type="GO" id="GO:0044211">
    <property type="term" value="P:CTP salvage"/>
    <property type="evidence" value="ECO:0007669"/>
    <property type="project" value="UniProtKB-UniRule"/>
</dbReference>
<dbReference type="GO" id="GO:0044206">
    <property type="term" value="P:UMP salvage"/>
    <property type="evidence" value="ECO:0007669"/>
    <property type="project" value="UniProtKB-UniRule"/>
</dbReference>
<dbReference type="CDD" id="cd02023">
    <property type="entry name" value="UMPK"/>
    <property type="match status" value="1"/>
</dbReference>
<dbReference type="Gene3D" id="3.40.50.300">
    <property type="entry name" value="P-loop containing nucleotide triphosphate hydrolases"/>
    <property type="match status" value="1"/>
</dbReference>
<dbReference type="HAMAP" id="MF_00551">
    <property type="entry name" value="Uridine_kinase"/>
    <property type="match status" value="1"/>
</dbReference>
<dbReference type="InterPro" id="IPR027417">
    <property type="entry name" value="P-loop_NTPase"/>
</dbReference>
<dbReference type="InterPro" id="IPR006083">
    <property type="entry name" value="PRK/URK"/>
</dbReference>
<dbReference type="InterPro" id="IPR026008">
    <property type="entry name" value="Uridine_kinase"/>
</dbReference>
<dbReference type="InterPro" id="IPR000764">
    <property type="entry name" value="Uridine_kinase-like"/>
</dbReference>
<dbReference type="NCBIfam" id="NF004018">
    <property type="entry name" value="PRK05480.1"/>
    <property type="match status" value="1"/>
</dbReference>
<dbReference type="NCBIfam" id="TIGR00235">
    <property type="entry name" value="udk"/>
    <property type="match status" value="1"/>
</dbReference>
<dbReference type="PANTHER" id="PTHR10285">
    <property type="entry name" value="URIDINE KINASE"/>
    <property type="match status" value="1"/>
</dbReference>
<dbReference type="Pfam" id="PF00485">
    <property type="entry name" value="PRK"/>
    <property type="match status" value="1"/>
</dbReference>
<dbReference type="PRINTS" id="PR00988">
    <property type="entry name" value="URIDINKINASE"/>
</dbReference>
<dbReference type="SUPFAM" id="SSF52540">
    <property type="entry name" value="P-loop containing nucleoside triphosphate hydrolases"/>
    <property type="match status" value="1"/>
</dbReference>
<evidence type="ECO:0000255" key="1">
    <source>
        <dbReference type="HAMAP-Rule" id="MF_00551"/>
    </source>
</evidence>
<gene>
    <name evidence="1" type="primary">udk</name>
    <name type="ordered locus">HSM_0984</name>
</gene>
<comment type="catalytic activity">
    <reaction evidence="1">
        <text>uridine + ATP = UMP + ADP + H(+)</text>
        <dbReference type="Rhea" id="RHEA:16825"/>
        <dbReference type="ChEBI" id="CHEBI:15378"/>
        <dbReference type="ChEBI" id="CHEBI:16704"/>
        <dbReference type="ChEBI" id="CHEBI:30616"/>
        <dbReference type="ChEBI" id="CHEBI:57865"/>
        <dbReference type="ChEBI" id="CHEBI:456216"/>
        <dbReference type="EC" id="2.7.1.48"/>
    </reaction>
</comment>
<comment type="catalytic activity">
    <reaction evidence="1">
        <text>cytidine + ATP = CMP + ADP + H(+)</text>
        <dbReference type="Rhea" id="RHEA:24674"/>
        <dbReference type="ChEBI" id="CHEBI:15378"/>
        <dbReference type="ChEBI" id="CHEBI:17562"/>
        <dbReference type="ChEBI" id="CHEBI:30616"/>
        <dbReference type="ChEBI" id="CHEBI:60377"/>
        <dbReference type="ChEBI" id="CHEBI:456216"/>
        <dbReference type="EC" id="2.7.1.48"/>
    </reaction>
</comment>
<comment type="pathway">
    <text evidence="1">Pyrimidine metabolism; CTP biosynthesis via salvage pathway; CTP from cytidine: step 1/3.</text>
</comment>
<comment type="pathway">
    <text evidence="1">Pyrimidine metabolism; UMP biosynthesis via salvage pathway; UMP from uridine: step 1/1.</text>
</comment>
<comment type="subcellular location">
    <subcellularLocation>
        <location evidence="1">Cytoplasm</location>
    </subcellularLocation>
</comment>
<comment type="similarity">
    <text evidence="1">Belongs to the uridine kinase family.</text>
</comment>
<accession>B0UT65</accession>
<keyword id="KW-0067">ATP-binding</keyword>
<keyword id="KW-0963">Cytoplasm</keyword>
<keyword id="KW-0418">Kinase</keyword>
<keyword id="KW-0547">Nucleotide-binding</keyword>
<keyword id="KW-0808">Transferase</keyword>
<organism>
    <name type="scientific">Histophilus somni (strain 2336)</name>
    <name type="common">Haemophilus somnus</name>
    <dbReference type="NCBI Taxonomy" id="228400"/>
    <lineage>
        <taxon>Bacteria</taxon>
        <taxon>Pseudomonadati</taxon>
        <taxon>Pseudomonadota</taxon>
        <taxon>Gammaproteobacteria</taxon>
        <taxon>Pasteurellales</taxon>
        <taxon>Pasteurellaceae</taxon>
        <taxon>Histophilus</taxon>
    </lineage>
</organism>
<name>URK_HISS2</name>
<reference key="1">
    <citation type="submission" date="2008-02" db="EMBL/GenBank/DDBJ databases">
        <title>Complete sequence of Haemophilus somnus 2336.</title>
        <authorList>
            <consortium name="US DOE Joint Genome Institute"/>
            <person name="Siddaramappa S."/>
            <person name="Duncan A.J."/>
            <person name="Challacombe J.F."/>
            <person name="Rainey D."/>
            <person name="Gillaspy A.F."/>
            <person name="Carson M."/>
            <person name="Gipson J."/>
            <person name="Gipson M."/>
            <person name="Bruce D."/>
            <person name="Detter J.C."/>
            <person name="Han C.S."/>
            <person name="Land M."/>
            <person name="Tapia R."/>
            <person name="Thompson L.S."/>
            <person name="Orvis J."/>
            <person name="Zaitshik J."/>
            <person name="Barnes G."/>
            <person name="Brettin T.S."/>
            <person name="Dyer D.W."/>
            <person name="Inzana T.J."/>
        </authorList>
    </citation>
    <scope>NUCLEOTIDE SEQUENCE [LARGE SCALE GENOMIC DNA]</scope>
    <source>
        <strain>2336</strain>
    </source>
</reference>
<feature type="chain" id="PRO_1000081968" description="Uridine kinase">
    <location>
        <begin position="1"/>
        <end position="213"/>
    </location>
</feature>
<feature type="binding site" evidence="1">
    <location>
        <begin position="13"/>
        <end position="20"/>
    </location>
    <ligand>
        <name>ATP</name>
        <dbReference type="ChEBI" id="CHEBI:30616"/>
    </ligand>
</feature>
<sequence>MSDQSCIIIAIAGASASGKSLIASTIHEELCNELGCEEIGIVTEDSYYKDQTHLSFEERIKTNYDHPNSMDRDLLIQHLCDLKKGKAVDIPVYSYVEHTRTQEVTRFEPKKVIILEGILLLTDERIRQEVNMSVFVDTPLDICFIRRLQRDMEERGRSLQSVIDQYKSTVRPMFLQFIEPSKQYADIVVPRGGKNRVAINMLKVQIQHLLNNK</sequence>